<name>TX130_LYCSI</name>
<protein>
    <recommendedName>
        <fullName>U1-lycotoxin-Ls1o</fullName>
    </recommendedName>
    <alternativeName>
        <fullName>Toxin-like structure LSTX-A30</fullName>
    </alternativeName>
</protein>
<accession>B6DCL9</accession>
<feature type="signal peptide" evidence="2">
    <location>
        <begin position="1"/>
        <end position="20"/>
    </location>
</feature>
<feature type="propeptide" id="PRO_0000401555" evidence="1">
    <location>
        <begin position="21"/>
        <end position="41"/>
    </location>
</feature>
<feature type="chain" id="PRO_0000401556" description="U1-lycotoxin-Ls1o">
    <location>
        <begin position="42"/>
        <end position="107"/>
    </location>
</feature>
<feature type="disulfide bond" evidence="1">
    <location>
        <begin position="44"/>
        <end position="59"/>
    </location>
</feature>
<feature type="disulfide bond" evidence="1">
    <location>
        <begin position="51"/>
        <end position="68"/>
    </location>
</feature>
<feature type="disulfide bond" evidence="1">
    <location>
        <begin position="58"/>
        <end position="86"/>
    </location>
</feature>
<feature type="disulfide bond" evidence="1">
    <location>
        <begin position="70"/>
        <end position="84"/>
    </location>
</feature>
<dbReference type="EMBL" id="EU925953">
    <property type="protein sequence ID" value="ACI41285.1"/>
    <property type="molecule type" value="mRNA"/>
</dbReference>
<dbReference type="EMBL" id="FM863957">
    <property type="protein sequence ID" value="CAS03555.1"/>
    <property type="molecule type" value="mRNA"/>
</dbReference>
<dbReference type="SMR" id="B6DCL9"/>
<dbReference type="ArachnoServer" id="AS000902">
    <property type="toxin name" value="U1-lycotoxin-Ls1o"/>
</dbReference>
<dbReference type="GO" id="GO:0005576">
    <property type="term" value="C:extracellular region"/>
    <property type="evidence" value="ECO:0007669"/>
    <property type="project" value="UniProtKB-SubCell"/>
</dbReference>
<dbReference type="GO" id="GO:0090729">
    <property type="term" value="F:toxin activity"/>
    <property type="evidence" value="ECO:0007669"/>
    <property type="project" value="UniProtKB-KW"/>
</dbReference>
<dbReference type="InterPro" id="IPR019553">
    <property type="entry name" value="Spider_toxin_CSTX_knottin"/>
</dbReference>
<dbReference type="InterPro" id="IPR011142">
    <property type="entry name" value="Spider_toxin_CSTX_Knottin_CS"/>
</dbReference>
<dbReference type="Pfam" id="PF10530">
    <property type="entry name" value="Toxin_35"/>
    <property type="match status" value="1"/>
</dbReference>
<dbReference type="PROSITE" id="PS60029">
    <property type="entry name" value="SPIDER_CSTX"/>
    <property type="match status" value="1"/>
</dbReference>
<organism>
    <name type="scientific">Lycosa singoriensis</name>
    <name type="common">Wolf spider</name>
    <name type="synonym">Aranea singoriensis</name>
    <dbReference type="NCBI Taxonomy" id="434756"/>
    <lineage>
        <taxon>Eukaryota</taxon>
        <taxon>Metazoa</taxon>
        <taxon>Ecdysozoa</taxon>
        <taxon>Arthropoda</taxon>
        <taxon>Chelicerata</taxon>
        <taxon>Arachnida</taxon>
        <taxon>Araneae</taxon>
        <taxon>Araneomorphae</taxon>
        <taxon>Entelegynae</taxon>
        <taxon>Lycosoidea</taxon>
        <taxon>Lycosidae</taxon>
        <taxon>Lycosa</taxon>
    </lineage>
</organism>
<keyword id="KW-1015">Disulfide bond</keyword>
<keyword id="KW-0960">Knottin</keyword>
<keyword id="KW-0964">Secreted</keyword>
<keyword id="KW-0732">Signal</keyword>
<keyword id="KW-0800">Toxin</keyword>
<comment type="subcellular location">
    <subcellularLocation>
        <location evidence="1">Secreted</location>
    </subcellularLocation>
</comment>
<comment type="tissue specificity">
    <text>Expressed by the venom gland.</text>
</comment>
<comment type="domain">
    <text evidence="1">The presence of a 'disulfide through disulfide knot' structurally defines this protein as a knottin.</text>
</comment>
<comment type="similarity">
    <text evidence="3">Belongs to the neurotoxin 19 (CSTX) family. 04 (U1-Lctx) subfamily.</text>
</comment>
<sequence length="107" mass="11902">MMKVLVVVALLVTLISYSSSEGIDDLEADELLSLMANEQTRKECIPKHHECTSNKHGCCRGNFFKYKCQCTTVVTQDGEQTERCFCGTPPHREAAELVVGFGKKIFG</sequence>
<proteinExistence type="evidence at transcript level"/>
<evidence type="ECO:0000250" key="1"/>
<evidence type="ECO:0000255" key="2"/>
<evidence type="ECO:0000305" key="3"/>
<reference key="1">
    <citation type="journal article" date="2010" name="Zoology">
        <title>Transcriptome analysis of the venom glands of the Chinese wolf spider Lycosa singoriensis.</title>
        <authorList>
            <person name="Zhang Y."/>
            <person name="Chen J."/>
            <person name="Tang X."/>
            <person name="Wang F."/>
            <person name="Jiang L."/>
            <person name="Xiong X."/>
            <person name="Wang M."/>
            <person name="Rong M."/>
            <person name="Liu Z."/>
            <person name="Liang S."/>
        </authorList>
    </citation>
    <scope>NUCLEOTIDE SEQUENCE [LARGE SCALE MRNA]</scope>
    <source>
        <tissue>Venom gland</tissue>
    </source>
</reference>